<organism>
    <name type="scientific">Acidiphilium cryptum (strain JF-5)</name>
    <dbReference type="NCBI Taxonomy" id="349163"/>
    <lineage>
        <taxon>Bacteria</taxon>
        <taxon>Pseudomonadati</taxon>
        <taxon>Pseudomonadota</taxon>
        <taxon>Alphaproteobacteria</taxon>
        <taxon>Acetobacterales</taxon>
        <taxon>Acidocellaceae</taxon>
        <taxon>Acidiphilium</taxon>
    </lineage>
</organism>
<name>GLYA_ACICJ</name>
<protein>
    <recommendedName>
        <fullName evidence="1">Serine hydroxymethyltransferase</fullName>
        <shortName evidence="1">SHMT</shortName>
        <shortName evidence="1">Serine methylase</shortName>
        <ecNumber evidence="1">2.1.2.1</ecNumber>
    </recommendedName>
</protein>
<reference key="1">
    <citation type="submission" date="2007-05" db="EMBL/GenBank/DDBJ databases">
        <title>Complete sequence of chromosome of Acidiphilium cryptum JF-5.</title>
        <authorList>
            <consortium name="US DOE Joint Genome Institute"/>
            <person name="Copeland A."/>
            <person name="Lucas S."/>
            <person name="Lapidus A."/>
            <person name="Barry K."/>
            <person name="Detter J.C."/>
            <person name="Glavina del Rio T."/>
            <person name="Hammon N."/>
            <person name="Israni S."/>
            <person name="Dalin E."/>
            <person name="Tice H."/>
            <person name="Pitluck S."/>
            <person name="Sims D."/>
            <person name="Brettin T."/>
            <person name="Bruce D."/>
            <person name="Han C."/>
            <person name="Schmutz J."/>
            <person name="Larimer F."/>
            <person name="Land M."/>
            <person name="Hauser L."/>
            <person name="Kyrpides N."/>
            <person name="Kim E."/>
            <person name="Magnuson T."/>
            <person name="Richardson P."/>
        </authorList>
    </citation>
    <scope>NUCLEOTIDE SEQUENCE [LARGE SCALE GENOMIC DNA]</scope>
    <source>
        <strain>JF-5</strain>
    </source>
</reference>
<comment type="function">
    <text evidence="1">Catalyzes the reversible interconversion of serine and glycine with tetrahydrofolate (THF) serving as the one-carbon carrier. This reaction serves as the major source of one-carbon groups required for the biosynthesis of purines, thymidylate, methionine, and other important biomolecules. Also exhibits THF-independent aldolase activity toward beta-hydroxyamino acids, producing glycine and aldehydes, via a retro-aldol mechanism.</text>
</comment>
<comment type="catalytic activity">
    <reaction evidence="1">
        <text>(6R)-5,10-methylene-5,6,7,8-tetrahydrofolate + glycine + H2O = (6S)-5,6,7,8-tetrahydrofolate + L-serine</text>
        <dbReference type="Rhea" id="RHEA:15481"/>
        <dbReference type="ChEBI" id="CHEBI:15377"/>
        <dbReference type="ChEBI" id="CHEBI:15636"/>
        <dbReference type="ChEBI" id="CHEBI:33384"/>
        <dbReference type="ChEBI" id="CHEBI:57305"/>
        <dbReference type="ChEBI" id="CHEBI:57453"/>
        <dbReference type="EC" id="2.1.2.1"/>
    </reaction>
</comment>
<comment type="cofactor">
    <cofactor evidence="1">
        <name>pyridoxal 5'-phosphate</name>
        <dbReference type="ChEBI" id="CHEBI:597326"/>
    </cofactor>
</comment>
<comment type="pathway">
    <text evidence="1">One-carbon metabolism; tetrahydrofolate interconversion.</text>
</comment>
<comment type="pathway">
    <text evidence="1">Amino-acid biosynthesis; glycine biosynthesis; glycine from L-serine: step 1/1.</text>
</comment>
<comment type="subunit">
    <text evidence="1">Homodimer.</text>
</comment>
<comment type="subcellular location">
    <subcellularLocation>
        <location evidence="1">Cytoplasm</location>
    </subcellularLocation>
</comment>
<comment type="similarity">
    <text evidence="1">Belongs to the SHMT family.</text>
</comment>
<gene>
    <name evidence="1" type="primary">glyA</name>
    <name type="ordered locus">Acry_2123</name>
</gene>
<accession>A5G0E0</accession>
<proteinExistence type="inferred from homology"/>
<keyword id="KW-0028">Amino-acid biosynthesis</keyword>
<keyword id="KW-0963">Cytoplasm</keyword>
<keyword id="KW-0554">One-carbon metabolism</keyword>
<keyword id="KW-0663">Pyridoxal phosphate</keyword>
<keyword id="KW-1185">Reference proteome</keyword>
<keyword id="KW-0808">Transferase</keyword>
<sequence>MNQQSPIANISRFFNAPLAETDPDLAAAIGRELGRQQDGIELIASENIVSRAVLEAQGSVLTNKYAEGYPGKRYYGGCAAVDIAEELAIARAKELFGCAFANVQPHSGAQANQAVFLALLNAGDTILGMSLAAGGHLTHGAAPNLSGKWFDAVQYGVKREDGTLDYEELERLARERKPKLIIAGGSAYPRFIDFARIRKVADEVGAYFMVDMAHFAGLVAAGIFPSPVPHAHVVTTTTHKTLRGPRGGMILSNDLDLGKKINSAVFPGLQGGPLMHVIAAKAVAFGEALRPEFRAYQKALAENAKVLAETLVEGGLDIVTGGTDCHLMLVDLRPKNVTGKAAEASLERAHMTANKNAIPFDPAKPAVTSGIRLGTPAATTRGFGPDEFRMVGRFIVEVLDGLSASNDGDNAAVEAAVGAKVLELCARFPIYR</sequence>
<feature type="chain" id="PRO_1000006210" description="Serine hydroxymethyltransferase">
    <location>
        <begin position="1"/>
        <end position="432"/>
    </location>
</feature>
<feature type="binding site" evidence="1">
    <location>
        <position position="131"/>
    </location>
    <ligand>
        <name>(6S)-5,6,7,8-tetrahydrofolate</name>
        <dbReference type="ChEBI" id="CHEBI:57453"/>
    </ligand>
</feature>
<feature type="binding site" evidence="1">
    <location>
        <begin position="135"/>
        <end position="137"/>
    </location>
    <ligand>
        <name>(6S)-5,6,7,8-tetrahydrofolate</name>
        <dbReference type="ChEBI" id="CHEBI:57453"/>
    </ligand>
</feature>
<feature type="site" description="Plays an important role in substrate specificity" evidence="1">
    <location>
        <position position="239"/>
    </location>
</feature>
<feature type="modified residue" description="N6-(pyridoxal phosphate)lysine" evidence="1">
    <location>
        <position position="240"/>
    </location>
</feature>
<evidence type="ECO:0000255" key="1">
    <source>
        <dbReference type="HAMAP-Rule" id="MF_00051"/>
    </source>
</evidence>
<dbReference type="EC" id="2.1.2.1" evidence="1"/>
<dbReference type="EMBL" id="CP000697">
    <property type="protein sequence ID" value="ABQ31322.1"/>
    <property type="molecule type" value="Genomic_DNA"/>
</dbReference>
<dbReference type="RefSeq" id="WP_012039829.1">
    <property type="nucleotide sequence ID" value="NC_009484.1"/>
</dbReference>
<dbReference type="SMR" id="A5G0E0"/>
<dbReference type="STRING" id="349163.Acry_2123"/>
<dbReference type="KEGG" id="acr:Acry_2123"/>
<dbReference type="eggNOG" id="COG0112">
    <property type="taxonomic scope" value="Bacteria"/>
</dbReference>
<dbReference type="HOGENOM" id="CLU_022477_2_0_5"/>
<dbReference type="UniPathway" id="UPA00193"/>
<dbReference type="UniPathway" id="UPA00288">
    <property type="reaction ID" value="UER01023"/>
</dbReference>
<dbReference type="Proteomes" id="UP000000245">
    <property type="component" value="Chromosome"/>
</dbReference>
<dbReference type="GO" id="GO:0005829">
    <property type="term" value="C:cytosol"/>
    <property type="evidence" value="ECO:0007669"/>
    <property type="project" value="TreeGrafter"/>
</dbReference>
<dbReference type="GO" id="GO:0004372">
    <property type="term" value="F:glycine hydroxymethyltransferase activity"/>
    <property type="evidence" value="ECO:0007669"/>
    <property type="project" value="UniProtKB-UniRule"/>
</dbReference>
<dbReference type="GO" id="GO:0030170">
    <property type="term" value="F:pyridoxal phosphate binding"/>
    <property type="evidence" value="ECO:0007669"/>
    <property type="project" value="UniProtKB-UniRule"/>
</dbReference>
<dbReference type="GO" id="GO:0019264">
    <property type="term" value="P:glycine biosynthetic process from serine"/>
    <property type="evidence" value="ECO:0007669"/>
    <property type="project" value="UniProtKB-UniRule"/>
</dbReference>
<dbReference type="GO" id="GO:0035999">
    <property type="term" value="P:tetrahydrofolate interconversion"/>
    <property type="evidence" value="ECO:0007669"/>
    <property type="project" value="UniProtKB-UniRule"/>
</dbReference>
<dbReference type="CDD" id="cd00378">
    <property type="entry name" value="SHMT"/>
    <property type="match status" value="1"/>
</dbReference>
<dbReference type="FunFam" id="3.40.640.10:FF:000001">
    <property type="entry name" value="Serine hydroxymethyltransferase"/>
    <property type="match status" value="1"/>
</dbReference>
<dbReference type="Gene3D" id="3.90.1150.10">
    <property type="entry name" value="Aspartate Aminotransferase, domain 1"/>
    <property type="match status" value="1"/>
</dbReference>
<dbReference type="Gene3D" id="3.40.640.10">
    <property type="entry name" value="Type I PLP-dependent aspartate aminotransferase-like (Major domain)"/>
    <property type="match status" value="1"/>
</dbReference>
<dbReference type="HAMAP" id="MF_00051">
    <property type="entry name" value="SHMT"/>
    <property type="match status" value="1"/>
</dbReference>
<dbReference type="InterPro" id="IPR015424">
    <property type="entry name" value="PyrdxlP-dep_Trfase"/>
</dbReference>
<dbReference type="InterPro" id="IPR015421">
    <property type="entry name" value="PyrdxlP-dep_Trfase_major"/>
</dbReference>
<dbReference type="InterPro" id="IPR015422">
    <property type="entry name" value="PyrdxlP-dep_Trfase_small"/>
</dbReference>
<dbReference type="InterPro" id="IPR001085">
    <property type="entry name" value="Ser_HO-MeTrfase"/>
</dbReference>
<dbReference type="InterPro" id="IPR049943">
    <property type="entry name" value="Ser_HO-MeTrfase-like"/>
</dbReference>
<dbReference type="InterPro" id="IPR019798">
    <property type="entry name" value="Ser_HO-MeTrfase_PLP_BS"/>
</dbReference>
<dbReference type="InterPro" id="IPR039429">
    <property type="entry name" value="SHMT-like_dom"/>
</dbReference>
<dbReference type="NCBIfam" id="NF000586">
    <property type="entry name" value="PRK00011.1"/>
    <property type="match status" value="1"/>
</dbReference>
<dbReference type="PANTHER" id="PTHR11680">
    <property type="entry name" value="SERINE HYDROXYMETHYLTRANSFERASE"/>
    <property type="match status" value="1"/>
</dbReference>
<dbReference type="PANTHER" id="PTHR11680:SF35">
    <property type="entry name" value="SERINE HYDROXYMETHYLTRANSFERASE 1"/>
    <property type="match status" value="1"/>
</dbReference>
<dbReference type="Pfam" id="PF00464">
    <property type="entry name" value="SHMT"/>
    <property type="match status" value="1"/>
</dbReference>
<dbReference type="PIRSF" id="PIRSF000412">
    <property type="entry name" value="SHMT"/>
    <property type="match status" value="1"/>
</dbReference>
<dbReference type="SUPFAM" id="SSF53383">
    <property type="entry name" value="PLP-dependent transferases"/>
    <property type="match status" value="1"/>
</dbReference>
<dbReference type="PROSITE" id="PS00096">
    <property type="entry name" value="SHMT"/>
    <property type="match status" value="1"/>
</dbReference>